<reference key="1">
    <citation type="journal article" date="2010" name="PLoS ONE">
        <title>Genome sequence of Cronobacter sakazakii BAA-894 and comparative genomic hybridization analysis with other Cronobacter species.</title>
        <authorList>
            <person name="Kucerova E."/>
            <person name="Clifton S.W."/>
            <person name="Xia X.Q."/>
            <person name="Long F."/>
            <person name="Porwollik S."/>
            <person name="Fulton L."/>
            <person name="Fronick C."/>
            <person name="Minx P."/>
            <person name="Kyung K."/>
            <person name="Warren W."/>
            <person name="Fulton R."/>
            <person name="Feng D."/>
            <person name="Wollam A."/>
            <person name="Shah N."/>
            <person name="Bhonagiri V."/>
            <person name="Nash W.E."/>
            <person name="Hallsworth-Pepin K."/>
            <person name="Wilson R.K."/>
            <person name="McClelland M."/>
            <person name="Forsythe S.J."/>
        </authorList>
    </citation>
    <scope>NUCLEOTIDE SEQUENCE [LARGE SCALE GENOMIC DNA]</scope>
    <source>
        <strain>ATCC BAA-894</strain>
    </source>
</reference>
<comment type="function">
    <text evidence="1">Responsible for synthesis of pseudouridine from uracil-13 in transfer RNAs.</text>
</comment>
<comment type="catalytic activity">
    <reaction evidence="1">
        <text>uridine(13) in tRNA = pseudouridine(13) in tRNA</text>
        <dbReference type="Rhea" id="RHEA:42540"/>
        <dbReference type="Rhea" id="RHEA-COMP:10105"/>
        <dbReference type="Rhea" id="RHEA-COMP:10106"/>
        <dbReference type="ChEBI" id="CHEBI:65314"/>
        <dbReference type="ChEBI" id="CHEBI:65315"/>
        <dbReference type="EC" id="5.4.99.27"/>
    </reaction>
</comment>
<comment type="similarity">
    <text evidence="1">Belongs to the pseudouridine synthase TruD family.</text>
</comment>
<accession>A7MJ59</accession>
<proteinExistence type="inferred from homology"/>
<dbReference type="EC" id="5.4.99.27" evidence="1"/>
<dbReference type="EMBL" id="CP000783">
    <property type="protein sequence ID" value="ABU75837.1"/>
    <property type="molecule type" value="Genomic_DNA"/>
</dbReference>
<dbReference type="RefSeq" id="WP_012123932.1">
    <property type="nucleotide sequence ID" value="NC_009778.1"/>
</dbReference>
<dbReference type="SMR" id="A7MJ59"/>
<dbReference type="KEGG" id="esa:ESA_00546"/>
<dbReference type="PATRIC" id="fig|290339.8.peg.490"/>
<dbReference type="HOGENOM" id="CLU_005281_4_0_6"/>
<dbReference type="Proteomes" id="UP000000260">
    <property type="component" value="Chromosome"/>
</dbReference>
<dbReference type="GO" id="GO:0005829">
    <property type="term" value="C:cytosol"/>
    <property type="evidence" value="ECO:0007669"/>
    <property type="project" value="TreeGrafter"/>
</dbReference>
<dbReference type="GO" id="GO:0003723">
    <property type="term" value="F:RNA binding"/>
    <property type="evidence" value="ECO:0007669"/>
    <property type="project" value="InterPro"/>
</dbReference>
<dbReference type="GO" id="GO:0160150">
    <property type="term" value="F:tRNA pseudouridine(13) synthase activity"/>
    <property type="evidence" value="ECO:0007669"/>
    <property type="project" value="UniProtKB-EC"/>
</dbReference>
<dbReference type="GO" id="GO:0031119">
    <property type="term" value="P:tRNA pseudouridine synthesis"/>
    <property type="evidence" value="ECO:0007669"/>
    <property type="project" value="UniProtKB-UniRule"/>
</dbReference>
<dbReference type="CDD" id="cd02575">
    <property type="entry name" value="PseudoU_synth_EcTruD"/>
    <property type="match status" value="1"/>
</dbReference>
<dbReference type="FunFam" id="3.30.2340.10:FF:000001">
    <property type="entry name" value="tRNA pseudouridine synthase D"/>
    <property type="match status" value="1"/>
</dbReference>
<dbReference type="FunFam" id="3.30.2350.20:FF:000001">
    <property type="entry name" value="tRNA pseudouridine synthase D"/>
    <property type="match status" value="1"/>
</dbReference>
<dbReference type="Gene3D" id="3.30.2350.20">
    <property type="entry name" value="TruD, catalytic domain"/>
    <property type="match status" value="1"/>
</dbReference>
<dbReference type="Gene3D" id="3.30.2340.10">
    <property type="entry name" value="TruD, insertion domain"/>
    <property type="match status" value="1"/>
</dbReference>
<dbReference type="HAMAP" id="MF_01082">
    <property type="entry name" value="TruD"/>
    <property type="match status" value="1"/>
</dbReference>
<dbReference type="InterPro" id="IPR020103">
    <property type="entry name" value="PsdUridine_synth_cat_dom_sf"/>
</dbReference>
<dbReference type="InterPro" id="IPR001656">
    <property type="entry name" value="PsdUridine_synth_TruD"/>
</dbReference>
<dbReference type="InterPro" id="IPR020119">
    <property type="entry name" value="PsdUridine_synth_TruD_CS"/>
</dbReference>
<dbReference type="InterPro" id="IPR011760">
    <property type="entry name" value="PsdUridine_synth_TruD_insert"/>
</dbReference>
<dbReference type="InterPro" id="IPR042214">
    <property type="entry name" value="TruD_catalytic"/>
</dbReference>
<dbReference type="InterPro" id="IPR043165">
    <property type="entry name" value="TruD_insert_sf"/>
</dbReference>
<dbReference type="InterPro" id="IPR050170">
    <property type="entry name" value="TruD_pseudoU_synthase"/>
</dbReference>
<dbReference type="NCBIfam" id="NF002155">
    <property type="entry name" value="PRK00984.1-4"/>
    <property type="match status" value="1"/>
</dbReference>
<dbReference type="NCBIfam" id="TIGR00094">
    <property type="entry name" value="tRNA_TruD_broad"/>
    <property type="match status" value="1"/>
</dbReference>
<dbReference type="PANTHER" id="PTHR47811">
    <property type="entry name" value="TRNA PSEUDOURIDINE SYNTHASE D"/>
    <property type="match status" value="1"/>
</dbReference>
<dbReference type="PANTHER" id="PTHR47811:SF1">
    <property type="entry name" value="TRNA PSEUDOURIDINE SYNTHASE D"/>
    <property type="match status" value="1"/>
</dbReference>
<dbReference type="Pfam" id="PF01142">
    <property type="entry name" value="TruD"/>
    <property type="match status" value="2"/>
</dbReference>
<dbReference type="SUPFAM" id="SSF55120">
    <property type="entry name" value="Pseudouridine synthase"/>
    <property type="match status" value="1"/>
</dbReference>
<dbReference type="PROSITE" id="PS50984">
    <property type="entry name" value="TRUD"/>
    <property type="match status" value="1"/>
</dbReference>
<dbReference type="PROSITE" id="PS01268">
    <property type="entry name" value="UPF0024"/>
    <property type="match status" value="1"/>
</dbReference>
<sequence length="349" mass="39099">MSDFNTLRWLHGQPQGQGRLKVSPTDFQVVEDLGFAPDGDGEHLLVRIRKTGCNTRAVADALAKFLGIAAREVSFAGQKDKYAVTEQWLCARLPGKEMPAMRAFTLEGCEVLEFARHRRKLRLGALKGNRFSLVLRDITHRDEIEQRLSLISEKGVPNYFGPQRFGRGGSNIYQAKRWAQTGQPPRERNKRGFALSAARSLMFNTLVSERLQRFGVNQVMDGDALQLAGRGSWFVTTPEELTDLQARVDSGELLITAALPGSGDWGTQRAALAFEQATLADETELLTLLTREKVEAARRAMLLFPRELRWQWQDDATLEVSFWLPAGSFATSVIRELFNTADDVSDISE</sequence>
<evidence type="ECO:0000255" key="1">
    <source>
        <dbReference type="HAMAP-Rule" id="MF_01082"/>
    </source>
</evidence>
<organism>
    <name type="scientific">Cronobacter sakazakii (strain ATCC BAA-894)</name>
    <name type="common">Enterobacter sakazakii</name>
    <dbReference type="NCBI Taxonomy" id="290339"/>
    <lineage>
        <taxon>Bacteria</taxon>
        <taxon>Pseudomonadati</taxon>
        <taxon>Pseudomonadota</taxon>
        <taxon>Gammaproteobacteria</taxon>
        <taxon>Enterobacterales</taxon>
        <taxon>Enterobacteriaceae</taxon>
        <taxon>Cronobacter</taxon>
    </lineage>
</organism>
<protein>
    <recommendedName>
        <fullName evidence="1">tRNA pseudouridine synthase D</fullName>
        <ecNumber evidence="1">5.4.99.27</ecNumber>
    </recommendedName>
    <alternativeName>
        <fullName evidence="1">tRNA pseudouridine(13) synthase</fullName>
    </alternativeName>
    <alternativeName>
        <fullName evidence="1">tRNA pseudouridylate synthase D</fullName>
    </alternativeName>
    <alternativeName>
        <fullName evidence="1">tRNA-uridine isomerase D</fullName>
    </alternativeName>
</protein>
<keyword id="KW-0413">Isomerase</keyword>
<keyword id="KW-1185">Reference proteome</keyword>
<keyword id="KW-0819">tRNA processing</keyword>
<feature type="chain" id="PRO_1000084741" description="tRNA pseudouridine synthase D">
    <location>
        <begin position="1"/>
        <end position="349"/>
    </location>
</feature>
<feature type="domain" description="TRUD" evidence="1">
    <location>
        <begin position="155"/>
        <end position="303"/>
    </location>
</feature>
<feature type="active site" description="Nucleophile" evidence="1">
    <location>
        <position position="80"/>
    </location>
</feature>
<feature type="binding site" evidence="1">
    <location>
        <position position="27"/>
    </location>
    <ligand>
        <name>substrate</name>
    </ligand>
</feature>
<feature type="binding site" evidence="1">
    <location>
        <position position="129"/>
    </location>
    <ligand>
        <name>substrate</name>
    </ligand>
</feature>
<feature type="binding site" evidence="1">
    <location>
        <position position="329"/>
    </location>
    <ligand>
        <name>substrate</name>
    </ligand>
</feature>
<gene>
    <name evidence="1" type="primary">truD</name>
    <name type="ordered locus">ESA_00546</name>
</gene>
<name>TRUD_CROS8</name>